<keyword id="KW-0255">Endonuclease</keyword>
<keyword id="KW-0378">Hydrolase</keyword>
<keyword id="KW-0540">Nuclease</keyword>
<keyword id="KW-1185">Reference proteome</keyword>
<keyword id="KW-1277">Toxin-antitoxin system</keyword>
<name>MAZF6_MYCTO</name>
<gene>
    <name type="primary">mazF6</name>
    <name type="ordered locus">MT2046</name>
</gene>
<feature type="chain" id="PRO_0000428002" description="Endoribonuclease MazF6">
    <location>
        <begin position="1"/>
        <end position="114"/>
    </location>
</feature>
<evidence type="ECO:0000250" key="1">
    <source>
        <dbReference type="UniProtKB" id="P9WII3"/>
    </source>
</evidence>
<evidence type="ECO:0000305" key="2"/>
<sequence length="114" mass="12262">MVISRAEIYWADLGPPSGSQPAKRRPVLVIQSDPYNASRLATVIAAVITSNTALAAMPGNVFLPATTTRLPRDSVVNVTAIVTLNKTDLTDRVGEVPASLMHEVDRGLRRVLDL</sequence>
<dbReference type="EC" id="3.1.27.-" evidence="2"/>
<dbReference type="EMBL" id="AE000516">
    <property type="protein sequence ID" value="AAK46323.1"/>
    <property type="molecule type" value="Genomic_DNA"/>
</dbReference>
<dbReference type="PIR" id="E70757">
    <property type="entry name" value="E70757"/>
</dbReference>
<dbReference type="RefSeq" id="WP_003410010.1">
    <property type="nucleotide sequence ID" value="NZ_KK341227.1"/>
</dbReference>
<dbReference type="SMR" id="P9WII2"/>
<dbReference type="GeneID" id="45425969"/>
<dbReference type="KEGG" id="mtc:MT2046"/>
<dbReference type="HOGENOM" id="CLU_121823_1_1_11"/>
<dbReference type="Proteomes" id="UP000001020">
    <property type="component" value="Chromosome"/>
</dbReference>
<dbReference type="GO" id="GO:0003677">
    <property type="term" value="F:DNA binding"/>
    <property type="evidence" value="ECO:0007669"/>
    <property type="project" value="InterPro"/>
</dbReference>
<dbReference type="GO" id="GO:0004521">
    <property type="term" value="F:RNA endonuclease activity"/>
    <property type="evidence" value="ECO:0007669"/>
    <property type="project" value="TreeGrafter"/>
</dbReference>
<dbReference type="GO" id="GO:0006402">
    <property type="term" value="P:mRNA catabolic process"/>
    <property type="evidence" value="ECO:0007669"/>
    <property type="project" value="TreeGrafter"/>
</dbReference>
<dbReference type="GO" id="GO:0016075">
    <property type="term" value="P:rRNA catabolic process"/>
    <property type="evidence" value="ECO:0007669"/>
    <property type="project" value="TreeGrafter"/>
</dbReference>
<dbReference type="FunFam" id="2.30.30.110:FF:000003">
    <property type="entry name" value="mRNA interferase"/>
    <property type="match status" value="1"/>
</dbReference>
<dbReference type="Gene3D" id="2.30.30.110">
    <property type="match status" value="1"/>
</dbReference>
<dbReference type="InterPro" id="IPR003477">
    <property type="entry name" value="PemK-like"/>
</dbReference>
<dbReference type="InterPro" id="IPR011067">
    <property type="entry name" value="Plasmid_toxin/cell-grow_inhib"/>
</dbReference>
<dbReference type="PANTHER" id="PTHR33988:SF2">
    <property type="entry name" value="ENDORIBONUCLEASE MAZF"/>
    <property type="match status" value="1"/>
</dbReference>
<dbReference type="PANTHER" id="PTHR33988">
    <property type="entry name" value="ENDORIBONUCLEASE MAZF-RELATED"/>
    <property type="match status" value="1"/>
</dbReference>
<dbReference type="Pfam" id="PF02452">
    <property type="entry name" value="PemK_toxin"/>
    <property type="match status" value="1"/>
</dbReference>
<dbReference type="PIRSF" id="PIRSF033490">
    <property type="entry name" value="MazF"/>
    <property type="match status" value="1"/>
</dbReference>
<dbReference type="SUPFAM" id="SSF50118">
    <property type="entry name" value="Cell growth inhibitor/plasmid maintenance toxic component"/>
    <property type="match status" value="1"/>
</dbReference>
<accession>P9WII2</accession>
<accession>L0T8B0</accession>
<accession>P64911</accession>
<accession>Q10867</accession>
<reference key="1">
    <citation type="journal article" date="2002" name="J. Bacteriol.">
        <title>Whole-genome comparison of Mycobacterium tuberculosis clinical and laboratory strains.</title>
        <authorList>
            <person name="Fleischmann R.D."/>
            <person name="Alland D."/>
            <person name="Eisen J.A."/>
            <person name="Carpenter L."/>
            <person name="White O."/>
            <person name="Peterson J.D."/>
            <person name="DeBoy R.T."/>
            <person name="Dodson R.J."/>
            <person name="Gwinn M.L."/>
            <person name="Haft D.H."/>
            <person name="Hickey E.K."/>
            <person name="Kolonay J.F."/>
            <person name="Nelson W.C."/>
            <person name="Umayam L.A."/>
            <person name="Ermolaeva M.D."/>
            <person name="Salzberg S.L."/>
            <person name="Delcher A."/>
            <person name="Utterback T.R."/>
            <person name="Weidman J.F."/>
            <person name="Khouri H.M."/>
            <person name="Gill J."/>
            <person name="Mikula A."/>
            <person name="Bishai W."/>
            <person name="Jacobs W.R. Jr."/>
            <person name="Venter J.C."/>
            <person name="Fraser C.M."/>
        </authorList>
    </citation>
    <scope>NUCLEOTIDE SEQUENCE [LARGE SCALE GENOMIC DNA]</scope>
    <source>
        <strain>CDC 1551 / Oshkosh</strain>
    </source>
</reference>
<proteinExistence type="inferred from homology"/>
<comment type="function">
    <text evidence="1">Toxic component of a type II toxin-antitoxin (TA) system. Acts as an endoribonuclease on single-strand RNA, cleaving between the second and third bases in the sequences CUCCU and UUCCU. Neutralized by coexpression with cognate antitoxin MazE6.</text>
</comment>
<comment type="subunit">
    <text evidence="1">Forms a complex with cognate toxin MazE6, which neutralizes the toxin.</text>
</comment>
<comment type="similarity">
    <text evidence="2">Belongs to the PemK/MazF family.</text>
</comment>
<organism>
    <name type="scientific">Mycobacterium tuberculosis (strain CDC 1551 / Oshkosh)</name>
    <dbReference type="NCBI Taxonomy" id="83331"/>
    <lineage>
        <taxon>Bacteria</taxon>
        <taxon>Bacillati</taxon>
        <taxon>Actinomycetota</taxon>
        <taxon>Actinomycetes</taxon>
        <taxon>Mycobacteriales</taxon>
        <taxon>Mycobacteriaceae</taxon>
        <taxon>Mycobacterium</taxon>
        <taxon>Mycobacterium tuberculosis complex</taxon>
    </lineage>
</organism>
<protein>
    <recommendedName>
        <fullName evidence="2">Endoribonuclease MazF6</fullName>
        <ecNumber evidence="2">3.1.27.-</ecNumber>
    </recommendedName>
    <alternativeName>
        <fullName>Toxin MazF6</fullName>
    </alternativeName>
    <alternativeName>
        <fullName>mRNA interferase MazF6</fullName>
    </alternativeName>
</protein>